<keyword id="KW-0963">Cytoplasm</keyword>
<keyword id="KW-0269">Exonuclease</keyword>
<keyword id="KW-0378">Hydrolase</keyword>
<keyword id="KW-0479">Metal-binding</keyword>
<keyword id="KW-0507">mRNA processing</keyword>
<keyword id="KW-0540">Nuclease</keyword>
<keyword id="KW-1185">Reference proteome</keyword>
<keyword id="KW-0677">Repeat</keyword>
<keyword id="KW-0853">WD repeat</keyword>
<comment type="function">
    <text evidence="2">Catalytic subunit of the poly(A)-nuclease (PAN) deadenylation complex, one of two cytoplasmic mRNA deadenylases involved in mRNA turnover. PAN specifically shortens poly(A) tails of RNA and the activity is stimulated by poly(A)-binding protein pab1. PAN deadenylation is followed by rapid degradation of the shortened mRNA tails by the CCR4-NOT complex. Deadenylated mRNAs are then degraded by two alternative mechanisms, namely exosome-mediated 3'-5' exonucleolytic degradation, or deadenylation-dependent mRNA decaping and subsequent 5'-3' exonucleolytic degradation by xrn1. May also be involved in post-transcriptional maturation of mRNA poly(A) tails.</text>
</comment>
<comment type="catalytic activity">
    <reaction evidence="2">
        <text>Exonucleolytic cleavage of poly(A) to 5'-AMP.</text>
        <dbReference type="EC" id="3.1.13.4"/>
    </reaction>
</comment>
<comment type="cofactor">
    <cofactor evidence="2">
        <name>a divalent metal cation</name>
        <dbReference type="ChEBI" id="CHEBI:60240"/>
    </cofactor>
    <text evidence="2">Binds 2 metal cations per subunit in the catalytic exonuclease domain.</text>
</comment>
<comment type="activity regulation">
    <text evidence="1 2">Positively regulated by the regulatory subunit pan3.</text>
</comment>
<comment type="subunit">
    <text evidence="2">Forms a heterotrimer with an asymmetric homodimer of the regulatory subunit pan3 to form the poly(A)-nuclease (PAN) deadenylation complex.</text>
</comment>
<comment type="subcellular location">
    <subcellularLocation>
        <location evidence="2">Cytoplasm</location>
    </subcellularLocation>
</comment>
<comment type="domain">
    <text evidence="2">Contains a pseudo-UCH domain. This ubiquitin C-terminal hydrolase (UCH)-like or ubiquitin specific protease (USP)-like domain is predicted to be catalytically inactive because it lacks the active site catalytic triad characteristic of thiol proteases, with residues at the equivalent structural positions that are incompatible with catalysis, and it cannot bind ubiquitin. It functions as a structural scaffold for intra- and intermolecular interactions in the complex.</text>
</comment>
<comment type="domain">
    <text evidence="2">The linker, or PAN3 interaction domain (PID), between the WD40 repeats and the pseudo-UCH domain mediates interaction with pan3.</text>
</comment>
<comment type="similarity">
    <text evidence="2">Belongs to the peptidase C19 family. PAN2 subfamily.</text>
</comment>
<protein>
    <recommendedName>
        <fullName evidence="2">PAN2-PAN3 deadenylation complex catalytic subunit pan2</fullName>
        <ecNumber evidence="2">3.1.13.4</ecNumber>
    </recommendedName>
    <alternativeName>
        <fullName evidence="2">PAB1P-dependent poly(A)-specific ribonuclease</fullName>
    </alternativeName>
    <alternativeName>
        <fullName evidence="2">Poly(A)-nuclease deadenylation complex subunit 2</fullName>
        <shortName evidence="2">PAN deadenylation complex subunit 2</shortName>
    </alternativeName>
</protein>
<organism>
    <name type="scientific">Aspergillus clavatus (strain ATCC 1007 / CBS 513.65 / DSM 816 / NCTC 3887 / NRRL 1 / QM 1276 / 107)</name>
    <dbReference type="NCBI Taxonomy" id="344612"/>
    <lineage>
        <taxon>Eukaryota</taxon>
        <taxon>Fungi</taxon>
        <taxon>Dikarya</taxon>
        <taxon>Ascomycota</taxon>
        <taxon>Pezizomycotina</taxon>
        <taxon>Eurotiomycetes</taxon>
        <taxon>Eurotiomycetidae</taxon>
        <taxon>Eurotiales</taxon>
        <taxon>Aspergillaceae</taxon>
        <taxon>Aspergillus</taxon>
        <taxon>Aspergillus subgen. Fumigati</taxon>
    </lineage>
</organism>
<gene>
    <name evidence="2" type="primary">pan2</name>
    <name type="ORF">ACLA_089990</name>
</gene>
<proteinExistence type="inferred from homology"/>
<reference key="1">
    <citation type="journal article" date="2008" name="PLoS Genet.">
        <title>Genomic islands in the pathogenic filamentous fungus Aspergillus fumigatus.</title>
        <authorList>
            <person name="Fedorova N.D."/>
            <person name="Khaldi N."/>
            <person name="Joardar V.S."/>
            <person name="Maiti R."/>
            <person name="Amedeo P."/>
            <person name="Anderson M.J."/>
            <person name="Crabtree J."/>
            <person name="Silva J.C."/>
            <person name="Badger J.H."/>
            <person name="Albarraq A."/>
            <person name="Angiuoli S."/>
            <person name="Bussey H."/>
            <person name="Bowyer P."/>
            <person name="Cotty P.J."/>
            <person name="Dyer P.S."/>
            <person name="Egan A."/>
            <person name="Galens K."/>
            <person name="Fraser-Liggett C.M."/>
            <person name="Haas B.J."/>
            <person name="Inman J.M."/>
            <person name="Kent R."/>
            <person name="Lemieux S."/>
            <person name="Malavazi I."/>
            <person name="Orvis J."/>
            <person name="Roemer T."/>
            <person name="Ronning C.M."/>
            <person name="Sundaram J.P."/>
            <person name="Sutton G."/>
            <person name="Turner G."/>
            <person name="Venter J.C."/>
            <person name="White O.R."/>
            <person name="Whitty B.R."/>
            <person name="Youngman P."/>
            <person name="Wolfe K.H."/>
            <person name="Goldman G.H."/>
            <person name="Wortman J.R."/>
            <person name="Jiang B."/>
            <person name="Denning D.W."/>
            <person name="Nierman W.C."/>
        </authorList>
    </citation>
    <scope>NUCLEOTIDE SEQUENCE [LARGE SCALE GENOMIC DNA]</scope>
    <source>
        <strain>ATCC 1007 / CBS 513.65 / DSM 816 / NCTC 3887 / NRRL 1 / QM 1276 / 107</strain>
    </source>
</reference>
<dbReference type="EC" id="3.1.13.4" evidence="2"/>
<dbReference type="EMBL" id="DS027052">
    <property type="protein sequence ID" value="EAW11306.1"/>
    <property type="molecule type" value="Genomic_DNA"/>
</dbReference>
<dbReference type="RefSeq" id="XP_001272732.1">
    <property type="nucleotide sequence ID" value="XM_001272731.1"/>
</dbReference>
<dbReference type="SMR" id="A1CEK7"/>
<dbReference type="STRING" id="344612.A1CEK7"/>
<dbReference type="EnsemblFungi" id="EAW11306">
    <property type="protein sequence ID" value="EAW11306"/>
    <property type="gene ID" value="ACLA_089990"/>
</dbReference>
<dbReference type="GeneID" id="4705070"/>
<dbReference type="KEGG" id="act:ACLA_089990"/>
<dbReference type="VEuPathDB" id="FungiDB:ACLA_089990"/>
<dbReference type="eggNOG" id="KOG1275">
    <property type="taxonomic scope" value="Eukaryota"/>
</dbReference>
<dbReference type="HOGENOM" id="CLU_002369_1_0_1"/>
<dbReference type="OMA" id="TQELLWT"/>
<dbReference type="OrthoDB" id="16516at2759"/>
<dbReference type="Proteomes" id="UP000006701">
    <property type="component" value="Unassembled WGS sequence"/>
</dbReference>
<dbReference type="GO" id="GO:0000932">
    <property type="term" value="C:P-body"/>
    <property type="evidence" value="ECO:0007669"/>
    <property type="project" value="TreeGrafter"/>
</dbReference>
<dbReference type="GO" id="GO:0031251">
    <property type="term" value="C:PAN complex"/>
    <property type="evidence" value="ECO:0007669"/>
    <property type="project" value="UniProtKB-UniRule"/>
</dbReference>
<dbReference type="GO" id="GO:0046872">
    <property type="term" value="F:metal ion binding"/>
    <property type="evidence" value="ECO:0007669"/>
    <property type="project" value="UniProtKB-KW"/>
</dbReference>
<dbReference type="GO" id="GO:0003676">
    <property type="term" value="F:nucleic acid binding"/>
    <property type="evidence" value="ECO:0007669"/>
    <property type="project" value="InterPro"/>
</dbReference>
<dbReference type="GO" id="GO:0004535">
    <property type="term" value="F:poly(A)-specific ribonuclease activity"/>
    <property type="evidence" value="ECO:0007669"/>
    <property type="project" value="UniProtKB-UniRule"/>
</dbReference>
<dbReference type="GO" id="GO:0006397">
    <property type="term" value="P:mRNA processing"/>
    <property type="evidence" value="ECO:0007669"/>
    <property type="project" value="UniProtKB-KW"/>
</dbReference>
<dbReference type="GO" id="GO:0000289">
    <property type="term" value="P:nuclear-transcribed mRNA poly(A) tail shortening"/>
    <property type="evidence" value="ECO:0007669"/>
    <property type="project" value="UniProtKB-UniRule"/>
</dbReference>
<dbReference type="CDD" id="cd06143">
    <property type="entry name" value="PAN2_exo"/>
    <property type="match status" value="1"/>
</dbReference>
<dbReference type="FunFam" id="2.130.10.10:FF:000459">
    <property type="entry name" value="PAN2-PAN3 deadenylation complex catalytic subunit PAN2"/>
    <property type="match status" value="1"/>
</dbReference>
<dbReference type="FunFam" id="3.30.420.10:FF:000028">
    <property type="entry name" value="PAN2-PAN3 deadenylation complex catalytic subunit PAN2"/>
    <property type="match status" value="1"/>
</dbReference>
<dbReference type="FunFam" id="3.90.70.10:FF:000135">
    <property type="entry name" value="PAN2-PAN3 deadenylation complex catalytic subunit pan2"/>
    <property type="match status" value="1"/>
</dbReference>
<dbReference type="Gene3D" id="3.90.70.10">
    <property type="entry name" value="Cysteine proteinases"/>
    <property type="match status" value="1"/>
</dbReference>
<dbReference type="Gene3D" id="3.30.420.10">
    <property type="entry name" value="Ribonuclease H-like superfamily/Ribonuclease H"/>
    <property type="match status" value="1"/>
</dbReference>
<dbReference type="Gene3D" id="2.130.10.10">
    <property type="entry name" value="YVTN repeat-like/Quinoprotein amine dehydrogenase"/>
    <property type="match status" value="1"/>
</dbReference>
<dbReference type="HAMAP" id="MF_03182">
    <property type="entry name" value="PAN2"/>
    <property type="match status" value="1"/>
</dbReference>
<dbReference type="InterPro" id="IPR013520">
    <property type="entry name" value="Exonuclease_RNaseT/DNA_pol3"/>
</dbReference>
<dbReference type="InterPro" id="IPR030843">
    <property type="entry name" value="PAN2"/>
</dbReference>
<dbReference type="InterPro" id="IPR050785">
    <property type="entry name" value="PAN2-PAN3_catalytic_subunit"/>
</dbReference>
<dbReference type="InterPro" id="IPR048841">
    <property type="entry name" value="PAN2_N"/>
</dbReference>
<dbReference type="InterPro" id="IPR028881">
    <property type="entry name" value="PAN2_UCH_dom"/>
</dbReference>
<dbReference type="InterPro" id="IPR038765">
    <property type="entry name" value="Papain-like_cys_pep_sf"/>
</dbReference>
<dbReference type="InterPro" id="IPR012337">
    <property type="entry name" value="RNaseH-like_sf"/>
</dbReference>
<dbReference type="InterPro" id="IPR036397">
    <property type="entry name" value="RNaseH_sf"/>
</dbReference>
<dbReference type="InterPro" id="IPR028889">
    <property type="entry name" value="USP_dom"/>
</dbReference>
<dbReference type="InterPro" id="IPR015943">
    <property type="entry name" value="WD40/YVTN_repeat-like_dom_sf"/>
</dbReference>
<dbReference type="InterPro" id="IPR036322">
    <property type="entry name" value="WD40_repeat_dom_sf"/>
</dbReference>
<dbReference type="PANTHER" id="PTHR15728">
    <property type="entry name" value="DEADENYLATION COMPLEX CATALYTIC SUBUNIT PAN2"/>
    <property type="match status" value="1"/>
</dbReference>
<dbReference type="PANTHER" id="PTHR15728:SF0">
    <property type="entry name" value="PAN2-PAN3 DEADENYLATION COMPLEX CATALYTIC SUBUNIT PAN2"/>
    <property type="match status" value="1"/>
</dbReference>
<dbReference type="Pfam" id="PF20770">
    <property type="entry name" value="PAN2_N"/>
    <property type="match status" value="1"/>
</dbReference>
<dbReference type="Pfam" id="PF00929">
    <property type="entry name" value="RNase_T"/>
    <property type="match status" value="1"/>
</dbReference>
<dbReference type="Pfam" id="PF13423">
    <property type="entry name" value="UCH_1"/>
    <property type="match status" value="1"/>
</dbReference>
<dbReference type="SMART" id="SM00479">
    <property type="entry name" value="EXOIII"/>
    <property type="match status" value="1"/>
</dbReference>
<dbReference type="SUPFAM" id="SSF54001">
    <property type="entry name" value="Cysteine proteinases"/>
    <property type="match status" value="1"/>
</dbReference>
<dbReference type="SUPFAM" id="SSF53098">
    <property type="entry name" value="Ribonuclease H-like"/>
    <property type="match status" value="1"/>
</dbReference>
<dbReference type="SUPFAM" id="SSF50978">
    <property type="entry name" value="WD40 repeat-like"/>
    <property type="match status" value="1"/>
</dbReference>
<dbReference type="PROSITE" id="PS50235">
    <property type="entry name" value="USP_3"/>
    <property type="match status" value="1"/>
</dbReference>
<sequence>MEADWDELSRIPVPAPSSHGLPTIATTIAFDDVSELLWAGNEFGRITSFYGPELQRYTSVRAHPVSDGPVRQILFHERGVISLSPKSVHMITRRGLSQWHIAHEEMTDLHCMSFTAQLNRIIVAGCQSAMFTIDIDKGVIVDKLQTDHNYTMMKKSRYLCAATDTGSVNALSLSDFQVVKSWKAHGTAINDMDARNDLLVTCGFSVRHLGSPIVDPLANVYDLKTLSPLPPIPFHAGAAYVRMHPKLHTTSFVASQTGQLQVVDLMNPNAINLRQANVSFMLGIDISPSGEALAINDAECAIHLWGSPSKVHFNEMSKEVEFADVVPRPPSLDWSPDTPLNMIGMPYYHERLFSAWPSHLVFEVGNPPASIDQSLIPYLRPAEMGHYAPNPKKTRRYQVENTRALTTAESALIAPKFLSEKAREQTRAKSEGSVSDTAEALAGAKLNGEAEDDPLLKYSNVEIKYSRFGVDDFDFRFYNQTIFSGLETHIANSFTNALLQLLKFIPLVRNLALHHAASTCIYETCLLCEMGYLFDMLEKANGQNCQATNLLKAFSSYREASNLGLLEENLTTKSLSSAIQSVNRFFLNQIAHDFRMILPSSDDLDHRLATIASESIRCMFCQNEIVRPGNSLANELIYPAIDIKQARRNPAFKFSNILRASIERETQNRGWCNYCRRYQQVTIRKTVHRMPLVLILNAALNNPLCRRLWSIPGWLPEEIGIVVEGGQVMCYEGDELKAQVQNKVPNLVLYDLVGLVAEIDIPEHQKAHLVSFINVSISSRETESKSRWHLFNDFLVTEVDKDEALRFNQPWKIPCVLAYQARDARHGVDDAWKDTLDTTLLFRDWSLNGGRPVESRQTLTEEEKPTPGTPVALDTEFVDLEKAEIDVKADGSQEIVRPNKSGLARVSVLRGSGIHEGVPFIDDYITIKEPIVDYVTQYSGIKPGDLDPRTSQHNLVPLKVAYKKLWLLLNLGCIFVGHGLASDFRKINIQVPKNQTVDTQYLYFHPGKNRRLSLRYLAWAVFKEYIQEESTDANQGHDSVEDARMALRLWKKFQEYEDAGIVNQILEEIFREGSRLGFRPPPRNGVATVLSRPGTAVTMQNNSGRNTPSTPDVGGAAAAAATTSAPATPRQAFRRSIALTPSNGTFGGPGTGDFFGGSPLK</sequence>
<feature type="chain" id="PRO_0000295335" description="PAN2-PAN3 deadenylation complex catalytic subunit pan2">
    <location>
        <begin position="1"/>
        <end position="1161"/>
    </location>
</feature>
<feature type="repeat" description="WD 1" evidence="2">
    <location>
        <begin position="20"/>
        <end position="59"/>
    </location>
</feature>
<feature type="repeat" description="WD 2" evidence="2">
    <location>
        <begin position="102"/>
        <end position="145"/>
    </location>
</feature>
<feature type="repeat" description="WD 3" evidence="2">
    <location>
        <begin position="276"/>
        <end position="315"/>
    </location>
</feature>
<feature type="domain" description="USP" evidence="2">
    <location>
        <begin position="453"/>
        <end position="822"/>
    </location>
</feature>
<feature type="domain" description="Exonuclease" evidence="2">
    <location>
        <begin position="871"/>
        <end position="1049"/>
    </location>
</feature>
<feature type="region of interest" description="Linker" evidence="2">
    <location>
        <begin position="316"/>
        <end position="452"/>
    </location>
</feature>
<feature type="region of interest" description="Disordered" evidence="3">
    <location>
        <begin position="1094"/>
        <end position="1161"/>
    </location>
</feature>
<feature type="compositionally biased region" description="Polar residues" evidence="3">
    <location>
        <begin position="1097"/>
        <end position="1110"/>
    </location>
</feature>
<feature type="compositionally biased region" description="Low complexity" evidence="3">
    <location>
        <begin position="1116"/>
        <end position="1129"/>
    </location>
</feature>
<feature type="compositionally biased region" description="Gly residues" evidence="3">
    <location>
        <begin position="1145"/>
        <end position="1155"/>
    </location>
</feature>
<feature type="binding site" evidence="2">
    <location>
        <position position="874"/>
    </location>
    <ligand>
        <name>a divalent metal cation</name>
        <dbReference type="ChEBI" id="CHEBI:60240"/>
        <note>catalytic</note>
    </ligand>
</feature>
<feature type="binding site" evidence="2">
    <location>
        <position position="876"/>
    </location>
    <ligand>
        <name>a divalent metal cation</name>
        <dbReference type="ChEBI" id="CHEBI:60240"/>
        <note>catalytic</note>
    </ligand>
</feature>
<feature type="binding site" evidence="2">
    <location>
        <position position="983"/>
    </location>
    <ligand>
        <name>a divalent metal cation</name>
        <dbReference type="ChEBI" id="CHEBI:60240"/>
        <note>catalytic</note>
    </ligand>
</feature>
<feature type="binding site" evidence="2">
    <location>
        <position position="1042"/>
    </location>
    <ligand>
        <name>a divalent metal cation</name>
        <dbReference type="ChEBI" id="CHEBI:60240"/>
        <note>catalytic</note>
    </ligand>
</feature>
<evidence type="ECO:0000250" key="1"/>
<evidence type="ECO:0000255" key="2">
    <source>
        <dbReference type="HAMAP-Rule" id="MF_03182"/>
    </source>
</evidence>
<evidence type="ECO:0000256" key="3">
    <source>
        <dbReference type="SAM" id="MobiDB-lite"/>
    </source>
</evidence>
<name>PAN2_ASPCL</name>
<accession>A1CEK7</accession>